<protein>
    <recommendedName>
        <fullName evidence="1">Small ribosomal subunit protein bS18</fullName>
    </recommendedName>
    <alternativeName>
        <fullName evidence="2">30S ribosomal protein S18</fullName>
    </alternativeName>
</protein>
<evidence type="ECO:0000255" key="1">
    <source>
        <dbReference type="HAMAP-Rule" id="MF_00270"/>
    </source>
</evidence>
<evidence type="ECO:0000305" key="2"/>
<sequence>MAQQRRGGFKRRKKFDYIAANKIEYVDYKDTELLSRFVSERGKILPRRVTGTSAKNQRKVTTAIKRARVMALMPYVNED</sequence>
<dbReference type="EMBL" id="CP000023">
    <property type="protein sequence ID" value="AAV61351.1"/>
    <property type="molecule type" value="Genomic_DNA"/>
</dbReference>
<dbReference type="RefSeq" id="WP_002945024.1">
    <property type="nucleotide sequence ID" value="NC_006448.1"/>
</dbReference>
<dbReference type="SMR" id="Q5M2Q5"/>
<dbReference type="STRING" id="264199.stu1752"/>
<dbReference type="GeneID" id="66899488"/>
<dbReference type="KEGG" id="stl:stu1752"/>
<dbReference type="eggNOG" id="COG0238">
    <property type="taxonomic scope" value="Bacteria"/>
</dbReference>
<dbReference type="HOGENOM" id="CLU_148710_2_2_9"/>
<dbReference type="Proteomes" id="UP000001170">
    <property type="component" value="Chromosome"/>
</dbReference>
<dbReference type="GO" id="GO:0022627">
    <property type="term" value="C:cytosolic small ribosomal subunit"/>
    <property type="evidence" value="ECO:0007669"/>
    <property type="project" value="TreeGrafter"/>
</dbReference>
<dbReference type="GO" id="GO:0070181">
    <property type="term" value="F:small ribosomal subunit rRNA binding"/>
    <property type="evidence" value="ECO:0007669"/>
    <property type="project" value="TreeGrafter"/>
</dbReference>
<dbReference type="GO" id="GO:0003735">
    <property type="term" value="F:structural constituent of ribosome"/>
    <property type="evidence" value="ECO:0007669"/>
    <property type="project" value="InterPro"/>
</dbReference>
<dbReference type="GO" id="GO:0006412">
    <property type="term" value="P:translation"/>
    <property type="evidence" value="ECO:0007669"/>
    <property type="project" value="UniProtKB-UniRule"/>
</dbReference>
<dbReference type="FunFam" id="4.10.640.10:FF:000003">
    <property type="entry name" value="30S ribosomal protein S18"/>
    <property type="match status" value="1"/>
</dbReference>
<dbReference type="Gene3D" id="4.10.640.10">
    <property type="entry name" value="Ribosomal protein S18"/>
    <property type="match status" value="1"/>
</dbReference>
<dbReference type="HAMAP" id="MF_00270">
    <property type="entry name" value="Ribosomal_bS18"/>
    <property type="match status" value="1"/>
</dbReference>
<dbReference type="InterPro" id="IPR001648">
    <property type="entry name" value="Ribosomal_bS18"/>
</dbReference>
<dbReference type="InterPro" id="IPR018275">
    <property type="entry name" value="Ribosomal_bS18_CS"/>
</dbReference>
<dbReference type="InterPro" id="IPR036870">
    <property type="entry name" value="Ribosomal_bS18_sf"/>
</dbReference>
<dbReference type="NCBIfam" id="TIGR00165">
    <property type="entry name" value="S18"/>
    <property type="match status" value="1"/>
</dbReference>
<dbReference type="PANTHER" id="PTHR13479">
    <property type="entry name" value="30S RIBOSOMAL PROTEIN S18"/>
    <property type="match status" value="1"/>
</dbReference>
<dbReference type="PANTHER" id="PTHR13479:SF40">
    <property type="entry name" value="SMALL RIBOSOMAL SUBUNIT PROTEIN BS18M"/>
    <property type="match status" value="1"/>
</dbReference>
<dbReference type="Pfam" id="PF01084">
    <property type="entry name" value="Ribosomal_S18"/>
    <property type="match status" value="1"/>
</dbReference>
<dbReference type="PRINTS" id="PR00974">
    <property type="entry name" value="RIBOSOMALS18"/>
</dbReference>
<dbReference type="SUPFAM" id="SSF46911">
    <property type="entry name" value="Ribosomal protein S18"/>
    <property type="match status" value="1"/>
</dbReference>
<dbReference type="PROSITE" id="PS00057">
    <property type="entry name" value="RIBOSOMAL_S18"/>
    <property type="match status" value="1"/>
</dbReference>
<gene>
    <name evidence="1" type="primary">rpsR</name>
    <name type="ordered locus">stu1752</name>
</gene>
<accession>Q5M2Q5</accession>
<feature type="chain" id="PRO_1000003636" description="Small ribosomal subunit protein bS18">
    <location>
        <begin position="1"/>
        <end position="79"/>
    </location>
</feature>
<reference key="1">
    <citation type="journal article" date="2004" name="Nat. Biotechnol.">
        <title>Complete sequence and comparative genome analysis of the dairy bacterium Streptococcus thermophilus.</title>
        <authorList>
            <person name="Bolotin A."/>
            <person name="Quinquis B."/>
            <person name="Renault P."/>
            <person name="Sorokin A."/>
            <person name="Ehrlich S.D."/>
            <person name="Kulakauskas S."/>
            <person name="Lapidus A."/>
            <person name="Goltsman E."/>
            <person name="Mazur M."/>
            <person name="Pusch G.D."/>
            <person name="Fonstein M."/>
            <person name="Overbeek R."/>
            <person name="Kyprides N."/>
            <person name="Purnelle B."/>
            <person name="Prozzi D."/>
            <person name="Ngui K."/>
            <person name="Masuy D."/>
            <person name="Hancy F."/>
            <person name="Burteau S."/>
            <person name="Boutry M."/>
            <person name="Delcour J."/>
            <person name="Goffeau A."/>
            <person name="Hols P."/>
        </authorList>
    </citation>
    <scope>NUCLEOTIDE SEQUENCE [LARGE SCALE GENOMIC DNA]</scope>
    <source>
        <strain>ATCC BAA-250 / LMG 18311</strain>
    </source>
</reference>
<name>RS18_STRT2</name>
<keyword id="KW-1185">Reference proteome</keyword>
<keyword id="KW-0687">Ribonucleoprotein</keyword>
<keyword id="KW-0689">Ribosomal protein</keyword>
<keyword id="KW-0694">RNA-binding</keyword>
<keyword id="KW-0699">rRNA-binding</keyword>
<organism>
    <name type="scientific">Streptococcus thermophilus (strain ATCC BAA-250 / LMG 18311)</name>
    <dbReference type="NCBI Taxonomy" id="264199"/>
    <lineage>
        <taxon>Bacteria</taxon>
        <taxon>Bacillati</taxon>
        <taxon>Bacillota</taxon>
        <taxon>Bacilli</taxon>
        <taxon>Lactobacillales</taxon>
        <taxon>Streptococcaceae</taxon>
        <taxon>Streptococcus</taxon>
    </lineage>
</organism>
<comment type="function">
    <text evidence="1">Binds as a heterodimer with protein bS6 to the central domain of the 16S rRNA, where it helps stabilize the platform of the 30S subunit.</text>
</comment>
<comment type="subunit">
    <text evidence="1">Part of the 30S ribosomal subunit. Forms a tight heterodimer with protein bS6.</text>
</comment>
<comment type="similarity">
    <text evidence="1">Belongs to the bacterial ribosomal protein bS18 family.</text>
</comment>
<proteinExistence type="inferred from homology"/>